<dbReference type="EC" id="2.4.2.21" evidence="1"/>
<dbReference type="EMBL" id="CP000527">
    <property type="protein sequence ID" value="ABM27135.1"/>
    <property type="molecule type" value="Genomic_DNA"/>
</dbReference>
<dbReference type="RefSeq" id="WP_011791399.1">
    <property type="nucleotide sequence ID" value="NC_008751.1"/>
</dbReference>
<dbReference type="SMR" id="A1V9L9"/>
<dbReference type="KEGG" id="dvl:Dvul_0111"/>
<dbReference type="HOGENOM" id="CLU_002982_0_0_7"/>
<dbReference type="UniPathway" id="UPA00061">
    <property type="reaction ID" value="UER00516"/>
</dbReference>
<dbReference type="Proteomes" id="UP000009173">
    <property type="component" value="Chromosome"/>
</dbReference>
<dbReference type="GO" id="GO:0008939">
    <property type="term" value="F:nicotinate-nucleotide-dimethylbenzimidazole phosphoribosyltransferase activity"/>
    <property type="evidence" value="ECO:0007669"/>
    <property type="project" value="UniProtKB-UniRule"/>
</dbReference>
<dbReference type="GO" id="GO:0009236">
    <property type="term" value="P:cobalamin biosynthetic process"/>
    <property type="evidence" value="ECO:0007669"/>
    <property type="project" value="UniProtKB-KW"/>
</dbReference>
<dbReference type="CDD" id="cd02439">
    <property type="entry name" value="DMB-PRT_CobT"/>
    <property type="match status" value="1"/>
</dbReference>
<dbReference type="FunFam" id="3.40.50.10210:FF:000001">
    <property type="entry name" value="Nicotinate-nucleotide--dimethylbenzimidazole phosphoribosyltransferase"/>
    <property type="match status" value="1"/>
</dbReference>
<dbReference type="Gene3D" id="1.10.1610.10">
    <property type="match status" value="1"/>
</dbReference>
<dbReference type="Gene3D" id="3.40.50.10210">
    <property type="match status" value="1"/>
</dbReference>
<dbReference type="HAMAP" id="MF_00230">
    <property type="entry name" value="CobT"/>
    <property type="match status" value="1"/>
</dbReference>
<dbReference type="InterPro" id="IPR003200">
    <property type="entry name" value="Nict_dMeBzImd_PRibTrfase"/>
</dbReference>
<dbReference type="InterPro" id="IPR017846">
    <property type="entry name" value="Nict_dMeBzImd_PRibTrfase_bact"/>
</dbReference>
<dbReference type="InterPro" id="IPR023195">
    <property type="entry name" value="Nict_dMeBzImd_PRibTrfase_N"/>
</dbReference>
<dbReference type="InterPro" id="IPR036087">
    <property type="entry name" value="Nict_dMeBzImd_PRibTrfase_sf"/>
</dbReference>
<dbReference type="NCBIfam" id="TIGR03160">
    <property type="entry name" value="cobT_DBIPRT"/>
    <property type="match status" value="1"/>
</dbReference>
<dbReference type="NCBIfam" id="NF000996">
    <property type="entry name" value="PRK00105.1"/>
    <property type="match status" value="1"/>
</dbReference>
<dbReference type="PANTHER" id="PTHR43463">
    <property type="entry name" value="NICOTINATE-NUCLEOTIDE--DIMETHYLBENZIMIDAZOLE PHOSPHORIBOSYLTRANSFERASE"/>
    <property type="match status" value="1"/>
</dbReference>
<dbReference type="PANTHER" id="PTHR43463:SF1">
    <property type="entry name" value="NICOTINATE-NUCLEOTIDE--DIMETHYLBENZIMIDAZOLE PHOSPHORIBOSYLTRANSFERASE"/>
    <property type="match status" value="1"/>
</dbReference>
<dbReference type="Pfam" id="PF02277">
    <property type="entry name" value="DBI_PRT"/>
    <property type="match status" value="1"/>
</dbReference>
<dbReference type="SUPFAM" id="SSF52733">
    <property type="entry name" value="Nicotinate mononucleotide:5,6-dimethylbenzimidazole phosphoribosyltransferase (CobT)"/>
    <property type="match status" value="1"/>
</dbReference>
<feature type="chain" id="PRO_1000021593" description="Nicotinate-nucleotide--dimethylbenzimidazole phosphoribosyltransferase">
    <location>
        <begin position="1"/>
        <end position="357"/>
    </location>
</feature>
<feature type="active site" description="Proton acceptor" evidence="1">
    <location>
        <position position="323"/>
    </location>
</feature>
<gene>
    <name evidence="1" type="primary">cobT</name>
    <name type="ordered locus">Dvul_0111</name>
</gene>
<evidence type="ECO:0000255" key="1">
    <source>
        <dbReference type="HAMAP-Rule" id="MF_00230"/>
    </source>
</evidence>
<sequence length="357" mass="36886">MNHELRSVIDAINPVDQSLMAAAQAHLDNLTKPRGSLGRLEELAARLYCIAGGRRPLRVDPARVFTVAGDHGVSAEGVSPFPQEVTRQMVLNFANGGAGINVLCRTAGVDLRVVDAGCLGGPFPEHPALIQRKVAEGTASIARGPAMSLETCEKALLLGISLAEEAAADGCRCVGTGDMGISNTTPSTALYCAYLGLDPADITGPGAGLASEAVRHKVEVIRRALEVNRHIVEAGDPVATLAALGGIEIATLAGLVIGAARHGLACVIDGFISTAAFTAAWKICPDVRGYCFLSHASAEPGYRSVVDALNAQPLLHLGLRLGEGTGGALAMFLMRAAADIFNDMATFADAGVSEADD</sequence>
<proteinExistence type="inferred from homology"/>
<reference key="1">
    <citation type="journal article" date="2009" name="Environ. Microbiol.">
        <title>Contribution of mobile genetic elements to Desulfovibrio vulgaris genome plasticity.</title>
        <authorList>
            <person name="Walker C.B."/>
            <person name="Stolyar S."/>
            <person name="Chivian D."/>
            <person name="Pinel N."/>
            <person name="Gabster J.A."/>
            <person name="Dehal P.S."/>
            <person name="He Z."/>
            <person name="Yang Z.K."/>
            <person name="Yen H.C."/>
            <person name="Zhou J."/>
            <person name="Wall J.D."/>
            <person name="Hazen T.C."/>
            <person name="Arkin A.P."/>
            <person name="Stahl D.A."/>
        </authorList>
    </citation>
    <scope>NUCLEOTIDE SEQUENCE [LARGE SCALE GENOMIC DNA]</scope>
    <source>
        <strain>DP4</strain>
    </source>
</reference>
<comment type="function">
    <text evidence="1">Catalyzes the synthesis of alpha-ribazole-5'-phosphate from nicotinate mononucleotide (NAMN) and 5,6-dimethylbenzimidazole (DMB).</text>
</comment>
<comment type="catalytic activity">
    <reaction evidence="1">
        <text>5,6-dimethylbenzimidazole + nicotinate beta-D-ribonucleotide = alpha-ribazole 5'-phosphate + nicotinate + H(+)</text>
        <dbReference type="Rhea" id="RHEA:11196"/>
        <dbReference type="ChEBI" id="CHEBI:15378"/>
        <dbReference type="ChEBI" id="CHEBI:15890"/>
        <dbReference type="ChEBI" id="CHEBI:32544"/>
        <dbReference type="ChEBI" id="CHEBI:57502"/>
        <dbReference type="ChEBI" id="CHEBI:57918"/>
        <dbReference type="EC" id="2.4.2.21"/>
    </reaction>
</comment>
<comment type="pathway">
    <text evidence="1">Nucleoside biosynthesis; alpha-ribazole biosynthesis; alpha-ribazole from 5,6-dimethylbenzimidazole: step 1/2.</text>
</comment>
<comment type="similarity">
    <text evidence="1">Belongs to the CobT family.</text>
</comment>
<name>COBT_NITV4</name>
<organism>
    <name type="scientific">Nitratidesulfovibrio vulgaris (strain DP4)</name>
    <name type="common">Desulfovibrio vulgaris</name>
    <dbReference type="NCBI Taxonomy" id="391774"/>
    <lineage>
        <taxon>Bacteria</taxon>
        <taxon>Pseudomonadati</taxon>
        <taxon>Thermodesulfobacteriota</taxon>
        <taxon>Desulfovibrionia</taxon>
        <taxon>Desulfovibrionales</taxon>
        <taxon>Desulfovibrionaceae</taxon>
        <taxon>Nitratidesulfovibrio</taxon>
    </lineage>
</organism>
<keyword id="KW-0169">Cobalamin biosynthesis</keyword>
<keyword id="KW-0328">Glycosyltransferase</keyword>
<keyword id="KW-0808">Transferase</keyword>
<protein>
    <recommendedName>
        <fullName evidence="1">Nicotinate-nucleotide--dimethylbenzimidazole phosphoribosyltransferase</fullName>
        <shortName evidence="1">NN:DBI PRT</shortName>
        <ecNumber evidence="1">2.4.2.21</ecNumber>
    </recommendedName>
    <alternativeName>
        <fullName evidence="1">N(1)-alpha-phosphoribosyltransferase</fullName>
    </alternativeName>
</protein>
<accession>A1V9L9</accession>